<evidence type="ECO:0000255" key="1">
    <source>
        <dbReference type="HAMAP-Rule" id="MF_00531"/>
    </source>
</evidence>
<evidence type="ECO:0000305" key="2"/>
<comment type="function">
    <text evidence="1">Protein S19 forms a complex with S13 that binds strongly to the 16S ribosomal RNA.</text>
</comment>
<comment type="similarity">
    <text evidence="1">Belongs to the universal ribosomal protein uS19 family.</text>
</comment>
<proteinExistence type="inferred from homology"/>
<reference key="1">
    <citation type="journal article" date="2009" name="PLoS ONE">
        <title>Complete genome sequence of Francisella tularensis subspecies holarctica FTNF002-00.</title>
        <authorList>
            <person name="Barabote R.D."/>
            <person name="Xie G."/>
            <person name="Brettin T.S."/>
            <person name="Hinrichs S.H."/>
            <person name="Fey P.D."/>
            <person name="Jay J.J."/>
            <person name="Engle J.L."/>
            <person name="Godbole S.D."/>
            <person name="Noronha J.M."/>
            <person name="Scheuermann R.H."/>
            <person name="Zhou L.W."/>
            <person name="Lion C."/>
            <person name="Dempsey M.P."/>
        </authorList>
    </citation>
    <scope>NUCLEOTIDE SEQUENCE [LARGE SCALE GENOMIC DNA]</scope>
    <source>
        <strain>FTNF002-00 / FTA</strain>
    </source>
</reference>
<organism>
    <name type="scientific">Francisella tularensis subsp. holarctica (strain FTNF002-00 / FTA)</name>
    <dbReference type="NCBI Taxonomy" id="458234"/>
    <lineage>
        <taxon>Bacteria</taxon>
        <taxon>Pseudomonadati</taxon>
        <taxon>Pseudomonadota</taxon>
        <taxon>Gammaproteobacteria</taxon>
        <taxon>Thiotrichales</taxon>
        <taxon>Francisellaceae</taxon>
        <taxon>Francisella</taxon>
    </lineage>
</organism>
<feature type="chain" id="PRO_1000051050" description="Small ribosomal subunit protein uS19">
    <location>
        <begin position="1"/>
        <end position="92"/>
    </location>
</feature>
<dbReference type="EMBL" id="CP000803">
    <property type="protein sequence ID" value="ABU60733.1"/>
    <property type="molecule type" value="Genomic_DNA"/>
</dbReference>
<dbReference type="RefSeq" id="WP_003027195.1">
    <property type="nucleotide sequence ID" value="NC_009749.1"/>
</dbReference>
<dbReference type="SMR" id="A7N9T0"/>
<dbReference type="GeneID" id="75264257"/>
<dbReference type="KEGG" id="fta:FTA_0256"/>
<dbReference type="HOGENOM" id="CLU_144911_0_1_6"/>
<dbReference type="GO" id="GO:0005737">
    <property type="term" value="C:cytoplasm"/>
    <property type="evidence" value="ECO:0007669"/>
    <property type="project" value="UniProtKB-ARBA"/>
</dbReference>
<dbReference type="GO" id="GO:0015935">
    <property type="term" value="C:small ribosomal subunit"/>
    <property type="evidence" value="ECO:0007669"/>
    <property type="project" value="InterPro"/>
</dbReference>
<dbReference type="GO" id="GO:0019843">
    <property type="term" value="F:rRNA binding"/>
    <property type="evidence" value="ECO:0007669"/>
    <property type="project" value="UniProtKB-UniRule"/>
</dbReference>
<dbReference type="GO" id="GO:0003735">
    <property type="term" value="F:structural constituent of ribosome"/>
    <property type="evidence" value="ECO:0007669"/>
    <property type="project" value="InterPro"/>
</dbReference>
<dbReference type="GO" id="GO:0000028">
    <property type="term" value="P:ribosomal small subunit assembly"/>
    <property type="evidence" value="ECO:0007669"/>
    <property type="project" value="TreeGrafter"/>
</dbReference>
<dbReference type="GO" id="GO:0006412">
    <property type="term" value="P:translation"/>
    <property type="evidence" value="ECO:0007669"/>
    <property type="project" value="UniProtKB-UniRule"/>
</dbReference>
<dbReference type="FunFam" id="3.30.860.10:FF:000001">
    <property type="entry name" value="30S ribosomal protein S19"/>
    <property type="match status" value="1"/>
</dbReference>
<dbReference type="Gene3D" id="3.30.860.10">
    <property type="entry name" value="30s Ribosomal Protein S19, Chain A"/>
    <property type="match status" value="1"/>
</dbReference>
<dbReference type="HAMAP" id="MF_00531">
    <property type="entry name" value="Ribosomal_uS19"/>
    <property type="match status" value="1"/>
</dbReference>
<dbReference type="InterPro" id="IPR002222">
    <property type="entry name" value="Ribosomal_uS19"/>
</dbReference>
<dbReference type="InterPro" id="IPR005732">
    <property type="entry name" value="Ribosomal_uS19_bac-type"/>
</dbReference>
<dbReference type="InterPro" id="IPR020934">
    <property type="entry name" value="Ribosomal_uS19_CS"/>
</dbReference>
<dbReference type="InterPro" id="IPR023575">
    <property type="entry name" value="Ribosomal_uS19_SF"/>
</dbReference>
<dbReference type="NCBIfam" id="TIGR01050">
    <property type="entry name" value="rpsS_bact"/>
    <property type="match status" value="1"/>
</dbReference>
<dbReference type="PANTHER" id="PTHR11880">
    <property type="entry name" value="RIBOSOMAL PROTEIN S19P FAMILY MEMBER"/>
    <property type="match status" value="1"/>
</dbReference>
<dbReference type="PANTHER" id="PTHR11880:SF8">
    <property type="entry name" value="SMALL RIBOSOMAL SUBUNIT PROTEIN US19M"/>
    <property type="match status" value="1"/>
</dbReference>
<dbReference type="Pfam" id="PF00203">
    <property type="entry name" value="Ribosomal_S19"/>
    <property type="match status" value="1"/>
</dbReference>
<dbReference type="PIRSF" id="PIRSF002144">
    <property type="entry name" value="Ribosomal_S19"/>
    <property type="match status" value="1"/>
</dbReference>
<dbReference type="PRINTS" id="PR00975">
    <property type="entry name" value="RIBOSOMALS19"/>
</dbReference>
<dbReference type="SUPFAM" id="SSF54570">
    <property type="entry name" value="Ribosomal protein S19"/>
    <property type="match status" value="1"/>
</dbReference>
<dbReference type="PROSITE" id="PS00323">
    <property type="entry name" value="RIBOSOMAL_S19"/>
    <property type="match status" value="1"/>
</dbReference>
<protein>
    <recommendedName>
        <fullName evidence="1">Small ribosomal subunit protein uS19</fullName>
    </recommendedName>
    <alternativeName>
        <fullName evidence="2">30S ribosomal protein S19</fullName>
    </alternativeName>
</protein>
<gene>
    <name evidence="1" type="primary">rpsS</name>
    <name type="ordered locus">FTA_0256</name>
</gene>
<keyword id="KW-0687">Ribonucleoprotein</keyword>
<keyword id="KW-0689">Ribosomal protein</keyword>
<keyword id="KW-0694">RNA-binding</keyword>
<keyword id="KW-0699">rRNA-binding</keyword>
<sequence length="92" mass="10499">MPRSLKKGPFVDHHLLKKVFEAQESNSKKPIKTWSRRSMIVPDMIGLTIAVHNGQQHVPVLMTEEMVGHKLGEFVVTRNYRGHAADKKAKKK</sequence>
<name>RS19_FRATF</name>
<accession>A7N9T0</accession>